<dbReference type="EMBL" id="AY916449">
    <property type="protein sequence ID" value="AAW82491.1"/>
    <property type="molecule type" value="Genomic_DNA"/>
</dbReference>
<dbReference type="RefSeq" id="YP_358564.1">
    <property type="nucleotide sequence ID" value="NC_007499.1"/>
</dbReference>
<dbReference type="SMR" id="Q3BAQ4"/>
<dbReference type="GeneID" id="3741666"/>
<dbReference type="GO" id="GO:0009535">
    <property type="term" value="C:chloroplast thylakoid membrane"/>
    <property type="evidence" value="ECO:0007669"/>
    <property type="project" value="UniProtKB-SubCell"/>
</dbReference>
<dbReference type="GO" id="GO:0005886">
    <property type="term" value="C:plasma membrane"/>
    <property type="evidence" value="ECO:0007669"/>
    <property type="project" value="UniProtKB-UniRule"/>
</dbReference>
<dbReference type="GO" id="GO:0045259">
    <property type="term" value="C:proton-transporting ATP synthase complex"/>
    <property type="evidence" value="ECO:0007669"/>
    <property type="project" value="UniProtKB-KW"/>
</dbReference>
<dbReference type="GO" id="GO:0046933">
    <property type="term" value="F:proton-transporting ATP synthase activity, rotational mechanism"/>
    <property type="evidence" value="ECO:0007669"/>
    <property type="project" value="UniProtKB-UniRule"/>
</dbReference>
<dbReference type="CDD" id="cd00310">
    <property type="entry name" value="ATP-synt_Fo_a_6"/>
    <property type="match status" value="1"/>
</dbReference>
<dbReference type="FunFam" id="1.20.120.220:FF:000001">
    <property type="entry name" value="ATP synthase subunit a, chloroplastic"/>
    <property type="match status" value="1"/>
</dbReference>
<dbReference type="Gene3D" id="1.20.120.220">
    <property type="entry name" value="ATP synthase, F0 complex, subunit A"/>
    <property type="match status" value="1"/>
</dbReference>
<dbReference type="HAMAP" id="MF_01393">
    <property type="entry name" value="ATP_synth_a_bact"/>
    <property type="match status" value="1"/>
</dbReference>
<dbReference type="InterPro" id="IPR045082">
    <property type="entry name" value="ATP_syn_F0_a_bact/chloroplast"/>
</dbReference>
<dbReference type="InterPro" id="IPR000568">
    <property type="entry name" value="ATP_synth_F0_asu"/>
</dbReference>
<dbReference type="InterPro" id="IPR023011">
    <property type="entry name" value="ATP_synth_F0_asu_AS"/>
</dbReference>
<dbReference type="InterPro" id="IPR035908">
    <property type="entry name" value="F0_ATP_A_sf"/>
</dbReference>
<dbReference type="NCBIfam" id="TIGR01131">
    <property type="entry name" value="ATP_synt_6_or_A"/>
    <property type="match status" value="1"/>
</dbReference>
<dbReference type="PANTHER" id="PTHR42823">
    <property type="entry name" value="ATP SYNTHASE SUBUNIT A, CHLOROPLASTIC"/>
    <property type="match status" value="1"/>
</dbReference>
<dbReference type="PANTHER" id="PTHR42823:SF3">
    <property type="entry name" value="ATP SYNTHASE SUBUNIT A, CHLOROPLASTIC"/>
    <property type="match status" value="1"/>
</dbReference>
<dbReference type="Pfam" id="PF00119">
    <property type="entry name" value="ATP-synt_A"/>
    <property type="match status" value="1"/>
</dbReference>
<dbReference type="PRINTS" id="PR00123">
    <property type="entry name" value="ATPASEA"/>
</dbReference>
<dbReference type="SUPFAM" id="SSF81336">
    <property type="entry name" value="F1F0 ATP synthase subunit A"/>
    <property type="match status" value="1"/>
</dbReference>
<dbReference type="PROSITE" id="PS00449">
    <property type="entry name" value="ATPASE_A"/>
    <property type="match status" value="1"/>
</dbReference>
<name>ATPI_PHAAO</name>
<protein>
    <recommendedName>
        <fullName evidence="1">ATP synthase subunit a, chloroplastic</fullName>
    </recommendedName>
    <alternativeName>
        <fullName evidence="1">ATP synthase F0 sector subunit a</fullName>
    </alternativeName>
    <alternativeName>
        <fullName evidence="1">F-ATPase subunit IV</fullName>
    </alternativeName>
</protein>
<evidence type="ECO:0000255" key="1">
    <source>
        <dbReference type="HAMAP-Rule" id="MF_01393"/>
    </source>
</evidence>
<proteinExistence type="inferred from homology"/>
<organism>
    <name type="scientific">Phalaenopsis aphrodite subsp. formosana</name>
    <name type="common">Moth orchid</name>
    <dbReference type="NCBI Taxonomy" id="308872"/>
    <lineage>
        <taxon>Eukaryota</taxon>
        <taxon>Viridiplantae</taxon>
        <taxon>Streptophyta</taxon>
        <taxon>Embryophyta</taxon>
        <taxon>Tracheophyta</taxon>
        <taxon>Spermatophyta</taxon>
        <taxon>Magnoliopsida</taxon>
        <taxon>Liliopsida</taxon>
        <taxon>Asparagales</taxon>
        <taxon>Orchidaceae</taxon>
        <taxon>Epidendroideae</taxon>
        <taxon>Vandeae</taxon>
        <taxon>Aeridinae</taxon>
        <taxon>Phalaenopsis</taxon>
    </lineage>
</organism>
<sequence>MNVIPCSIKTLKGLYDISGVEVGQHLYWQIGGLQIHAQVLITSWVVIAILLGSVIIAVRNPQTIPTNGQNFFEYVLEFIQDLSKTQIGEEYGPWVPFIGTMFLFIFVSNWSGALLPWKIIKLPHGELAAPTNDINTTVALALPTSVAYFYAGLRKKGLGYFGKYIQPTPILLPINILEDFTKPLSLSFRLFGNILADELVVVVLVSLVPSVVPIPVMFLGLFTSGIQALIFATLAAAYIGESMEGHH</sequence>
<keyword id="KW-0066">ATP synthesis</keyword>
<keyword id="KW-0138">CF(0)</keyword>
<keyword id="KW-0150">Chloroplast</keyword>
<keyword id="KW-0375">Hydrogen ion transport</keyword>
<keyword id="KW-0406">Ion transport</keyword>
<keyword id="KW-0472">Membrane</keyword>
<keyword id="KW-0934">Plastid</keyword>
<keyword id="KW-0793">Thylakoid</keyword>
<keyword id="KW-0812">Transmembrane</keyword>
<keyword id="KW-1133">Transmembrane helix</keyword>
<keyword id="KW-0813">Transport</keyword>
<feature type="chain" id="PRO_0000362588" description="ATP synthase subunit a, chloroplastic">
    <location>
        <begin position="1"/>
        <end position="247"/>
    </location>
</feature>
<feature type="transmembrane region" description="Helical" evidence="1">
    <location>
        <begin position="38"/>
        <end position="58"/>
    </location>
</feature>
<feature type="transmembrane region" description="Helical" evidence="1">
    <location>
        <begin position="95"/>
        <end position="115"/>
    </location>
</feature>
<feature type="transmembrane region" description="Helical" evidence="1">
    <location>
        <begin position="133"/>
        <end position="153"/>
    </location>
</feature>
<feature type="transmembrane region" description="Helical" evidence="1">
    <location>
        <begin position="199"/>
        <end position="219"/>
    </location>
</feature>
<feature type="transmembrane region" description="Helical" evidence="1">
    <location>
        <begin position="220"/>
        <end position="240"/>
    </location>
</feature>
<comment type="function">
    <text evidence="1">Key component of the proton channel; it plays a direct role in the translocation of protons across the membrane.</text>
</comment>
<comment type="subunit">
    <text evidence="1">F-type ATPases have 2 components, CF(1) - the catalytic core - and CF(0) - the membrane proton channel. CF(1) has five subunits: alpha(3), beta(3), gamma(1), delta(1), epsilon(1). CF(0) has four main subunits: a, b, b' and c.</text>
</comment>
<comment type="subcellular location">
    <subcellularLocation>
        <location evidence="1">Plastid</location>
        <location evidence="1">Chloroplast thylakoid membrane</location>
        <topology evidence="1">Multi-pass membrane protein</topology>
    </subcellularLocation>
</comment>
<comment type="similarity">
    <text evidence="1">Belongs to the ATPase A chain family.</text>
</comment>
<reference key="1">
    <citation type="journal article" date="2006" name="Mol. Biol. Evol.">
        <title>The chloroplast genome of Phalaenopsis aphrodite (Orchidaceae): comparative analysis of evolutionary rate with that of grasses and its phylogenetic implications.</title>
        <authorList>
            <person name="Chang C.-C."/>
            <person name="Lin H.-C."/>
            <person name="Lin I.-P."/>
            <person name="Chow T.-Y."/>
            <person name="Chen H.-H."/>
            <person name="Chen W.-H."/>
            <person name="Cheng C.-H."/>
            <person name="Lin C.-Y."/>
            <person name="Liu S.-M."/>
            <person name="Chang C.-C."/>
            <person name="Chaw S.-M."/>
        </authorList>
    </citation>
    <scope>NUCLEOTIDE SEQUENCE [LARGE SCALE GENOMIC DNA]</scope>
    <source>
        <strain>cv. Taisugar TS-97</strain>
    </source>
</reference>
<accession>Q3BAQ4</accession>
<geneLocation type="chloroplast"/>
<gene>
    <name evidence="1" type="primary">atpI</name>
</gene>